<sequence length="497" mass="55450">MEKKYILALDQGTTSSRAMIIDEEGEVIGVAQEEFDQIFPKPGWVEHSANEIWASILAVIAGVLLKTNISSKEIAGIGITNQRETTVIWDKESGNPIYNAIVWQSRQTEDICKQLRKDGYEDTIRSKTGLLIDPYFAGTKARWILDHVDGAQERAEKGELLFGTIDTWLVWKLTGGRAHITDYSNASRTLLYNIYDLEWDDELLKMLNIPRAMLPEVRPSSEVYADTVPYHFFGEEVPVAGIAGDQQAALFGQGCFEKGMAKNTYGTGCFLLMNTGEKAVRSENGLLTTLAWGIDGKVEYALEGSIFVAGSAIQWLRDGLRMVRQSSDSENYASRIESSDGVYVVPAFVGLGAPYWDSDVRGAVFGLTRGTEKEQFIRATLESLAYQTRDVLYAMEQDSGISLKTLRVDGGASANNFLMQFQSDILGVPVERPENKETTVLGAAFLAGLAVGVWKDKNEIKKHWKLDKRFEVEMKEEQREDLYDGWHKAVKAAQAFK</sequence>
<evidence type="ECO:0000255" key="1">
    <source>
        <dbReference type="HAMAP-Rule" id="MF_00186"/>
    </source>
</evidence>
<dbReference type="EC" id="2.7.1.30" evidence="1"/>
<dbReference type="EMBL" id="AM263198">
    <property type="protein sequence ID" value="CAK20969.1"/>
    <property type="molecule type" value="Genomic_DNA"/>
</dbReference>
<dbReference type="RefSeq" id="WP_011702340.1">
    <property type="nucleotide sequence ID" value="NC_008555.1"/>
</dbReference>
<dbReference type="SMR" id="A0AIY7"/>
<dbReference type="STRING" id="386043.lwe1551"/>
<dbReference type="GeneID" id="61189428"/>
<dbReference type="KEGG" id="lwe:lwe1551"/>
<dbReference type="eggNOG" id="COG0554">
    <property type="taxonomic scope" value="Bacteria"/>
</dbReference>
<dbReference type="HOGENOM" id="CLU_009281_2_3_9"/>
<dbReference type="OrthoDB" id="9805576at2"/>
<dbReference type="UniPathway" id="UPA00618">
    <property type="reaction ID" value="UER00672"/>
</dbReference>
<dbReference type="Proteomes" id="UP000000779">
    <property type="component" value="Chromosome"/>
</dbReference>
<dbReference type="GO" id="GO:0005829">
    <property type="term" value="C:cytosol"/>
    <property type="evidence" value="ECO:0007669"/>
    <property type="project" value="TreeGrafter"/>
</dbReference>
<dbReference type="GO" id="GO:0005524">
    <property type="term" value="F:ATP binding"/>
    <property type="evidence" value="ECO:0007669"/>
    <property type="project" value="UniProtKB-UniRule"/>
</dbReference>
<dbReference type="GO" id="GO:0004370">
    <property type="term" value="F:glycerol kinase activity"/>
    <property type="evidence" value="ECO:0000250"/>
    <property type="project" value="UniProtKB"/>
</dbReference>
<dbReference type="GO" id="GO:0019563">
    <property type="term" value="P:glycerol catabolic process"/>
    <property type="evidence" value="ECO:0007669"/>
    <property type="project" value="UniProtKB-UniRule"/>
</dbReference>
<dbReference type="GO" id="GO:0006071">
    <property type="term" value="P:glycerol metabolic process"/>
    <property type="evidence" value="ECO:0000250"/>
    <property type="project" value="UniProtKB"/>
</dbReference>
<dbReference type="GO" id="GO:0006072">
    <property type="term" value="P:glycerol-3-phosphate metabolic process"/>
    <property type="evidence" value="ECO:0007669"/>
    <property type="project" value="InterPro"/>
</dbReference>
<dbReference type="CDD" id="cd07786">
    <property type="entry name" value="FGGY_EcGK_like"/>
    <property type="match status" value="1"/>
</dbReference>
<dbReference type="FunFam" id="3.30.420.40:FF:000007">
    <property type="entry name" value="Glycerol kinase"/>
    <property type="match status" value="1"/>
</dbReference>
<dbReference type="FunFam" id="3.30.420.40:FF:000008">
    <property type="entry name" value="Glycerol kinase"/>
    <property type="match status" value="1"/>
</dbReference>
<dbReference type="Gene3D" id="3.30.420.40">
    <property type="match status" value="2"/>
</dbReference>
<dbReference type="HAMAP" id="MF_00186">
    <property type="entry name" value="Glycerol_kin"/>
    <property type="match status" value="1"/>
</dbReference>
<dbReference type="InterPro" id="IPR043129">
    <property type="entry name" value="ATPase_NBD"/>
</dbReference>
<dbReference type="InterPro" id="IPR000577">
    <property type="entry name" value="Carb_kinase_FGGY"/>
</dbReference>
<dbReference type="InterPro" id="IPR018483">
    <property type="entry name" value="Carb_kinase_FGGY_CS"/>
</dbReference>
<dbReference type="InterPro" id="IPR018485">
    <property type="entry name" value="FGGY_C"/>
</dbReference>
<dbReference type="InterPro" id="IPR018484">
    <property type="entry name" value="FGGY_N"/>
</dbReference>
<dbReference type="InterPro" id="IPR005999">
    <property type="entry name" value="Glycerol_kin"/>
</dbReference>
<dbReference type="NCBIfam" id="TIGR01311">
    <property type="entry name" value="glycerol_kin"/>
    <property type="match status" value="1"/>
</dbReference>
<dbReference type="NCBIfam" id="NF000756">
    <property type="entry name" value="PRK00047.1"/>
    <property type="match status" value="1"/>
</dbReference>
<dbReference type="PANTHER" id="PTHR10196:SF69">
    <property type="entry name" value="GLYCEROL KINASE"/>
    <property type="match status" value="1"/>
</dbReference>
<dbReference type="PANTHER" id="PTHR10196">
    <property type="entry name" value="SUGAR KINASE"/>
    <property type="match status" value="1"/>
</dbReference>
<dbReference type="Pfam" id="PF02782">
    <property type="entry name" value="FGGY_C"/>
    <property type="match status" value="1"/>
</dbReference>
<dbReference type="Pfam" id="PF00370">
    <property type="entry name" value="FGGY_N"/>
    <property type="match status" value="1"/>
</dbReference>
<dbReference type="PIRSF" id="PIRSF000538">
    <property type="entry name" value="GlpK"/>
    <property type="match status" value="1"/>
</dbReference>
<dbReference type="SUPFAM" id="SSF53067">
    <property type="entry name" value="Actin-like ATPase domain"/>
    <property type="match status" value="2"/>
</dbReference>
<dbReference type="PROSITE" id="PS00445">
    <property type="entry name" value="FGGY_KINASES_2"/>
    <property type="match status" value="1"/>
</dbReference>
<name>GLPK_LISW6</name>
<feature type="chain" id="PRO_1000020743" description="Glycerol kinase">
    <location>
        <begin position="1"/>
        <end position="497"/>
    </location>
</feature>
<feature type="binding site" evidence="1">
    <location>
        <position position="13"/>
    </location>
    <ligand>
        <name>ADP</name>
        <dbReference type="ChEBI" id="CHEBI:456216"/>
    </ligand>
</feature>
<feature type="binding site" evidence="1">
    <location>
        <position position="13"/>
    </location>
    <ligand>
        <name>ATP</name>
        <dbReference type="ChEBI" id="CHEBI:30616"/>
    </ligand>
</feature>
<feature type="binding site" evidence="1">
    <location>
        <position position="13"/>
    </location>
    <ligand>
        <name>sn-glycerol 3-phosphate</name>
        <dbReference type="ChEBI" id="CHEBI:57597"/>
    </ligand>
</feature>
<feature type="binding site" evidence="1">
    <location>
        <position position="14"/>
    </location>
    <ligand>
        <name>ATP</name>
        <dbReference type="ChEBI" id="CHEBI:30616"/>
    </ligand>
</feature>
<feature type="binding site" evidence="1">
    <location>
        <position position="15"/>
    </location>
    <ligand>
        <name>ATP</name>
        <dbReference type="ChEBI" id="CHEBI:30616"/>
    </ligand>
</feature>
<feature type="binding site" evidence="1">
    <location>
        <position position="17"/>
    </location>
    <ligand>
        <name>ADP</name>
        <dbReference type="ChEBI" id="CHEBI:456216"/>
    </ligand>
</feature>
<feature type="binding site" evidence="1">
    <location>
        <position position="83"/>
    </location>
    <ligand>
        <name>glycerol</name>
        <dbReference type="ChEBI" id="CHEBI:17754"/>
    </ligand>
</feature>
<feature type="binding site" evidence="1">
    <location>
        <position position="83"/>
    </location>
    <ligand>
        <name>sn-glycerol 3-phosphate</name>
        <dbReference type="ChEBI" id="CHEBI:57597"/>
    </ligand>
</feature>
<feature type="binding site" evidence="1">
    <location>
        <position position="84"/>
    </location>
    <ligand>
        <name>glycerol</name>
        <dbReference type="ChEBI" id="CHEBI:17754"/>
    </ligand>
</feature>
<feature type="binding site" evidence="1">
    <location>
        <position position="84"/>
    </location>
    <ligand>
        <name>sn-glycerol 3-phosphate</name>
        <dbReference type="ChEBI" id="CHEBI:57597"/>
    </ligand>
</feature>
<feature type="binding site" evidence="1">
    <location>
        <position position="135"/>
    </location>
    <ligand>
        <name>glycerol</name>
        <dbReference type="ChEBI" id="CHEBI:17754"/>
    </ligand>
</feature>
<feature type="binding site" evidence="1">
    <location>
        <position position="135"/>
    </location>
    <ligand>
        <name>sn-glycerol 3-phosphate</name>
        <dbReference type="ChEBI" id="CHEBI:57597"/>
    </ligand>
</feature>
<feature type="binding site" evidence="1">
    <location>
        <position position="245"/>
    </location>
    <ligand>
        <name>glycerol</name>
        <dbReference type="ChEBI" id="CHEBI:17754"/>
    </ligand>
</feature>
<feature type="binding site" evidence="1">
    <location>
        <position position="245"/>
    </location>
    <ligand>
        <name>sn-glycerol 3-phosphate</name>
        <dbReference type="ChEBI" id="CHEBI:57597"/>
    </ligand>
</feature>
<feature type="binding site" evidence="1">
    <location>
        <position position="246"/>
    </location>
    <ligand>
        <name>glycerol</name>
        <dbReference type="ChEBI" id="CHEBI:17754"/>
    </ligand>
</feature>
<feature type="binding site" evidence="1">
    <location>
        <position position="267"/>
    </location>
    <ligand>
        <name>ADP</name>
        <dbReference type="ChEBI" id="CHEBI:456216"/>
    </ligand>
</feature>
<feature type="binding site" evidence="1">
    <location>
        <position position="267"/>
    </location>
    <ligand>
        <name>ATP</name>
        <dbReference type="ChEBI" id="CHEBI:30616"/>
    </ligand>
</feature>
<feature type="binding site" evidence="1">
    <location>
        <position position="310"/>
    </location>
    <ligand>
        <name>ADP</name>
        <dbReference type="ChEBI" id="CHEBI:456216"/>
    </ligand>
</feature>
<feature type="binding site" evidence="1">
    <location>
        <position position="310"/>
    </location>
    <ligand>
        <name>ATP</name>
        <dbReference type="ChEBI" id="CHEBI:30616"/>
    </ligand>
</feature>
<feature type="binding site" evidence="1">
    <location>
        <position position="314"/>
    </location>
    <ligand>
        <name>ATP</name>
        <dbReference type="ChEBI" id="CHEBI:30616"/>
    </ligand>
</feature>
<feature type="binding site" evidence="1">
    <location>
        <position position="411"/>
    </location>
    <ligand>
        <name>ADP</name>
        <dbReference type="ChEBI" id="CHEBI:456216"/>
    </ligand>
</feature>
<feature type="binding site" evidence="1">
    <location>
        <position position="411"/>
    </location>
    <ligand>
        <name>ATP</name>
        <dbReference type="ChEBI" id="CHEBI:30616"/>
    </ligand>
</feature>
<feature type="binding site" evidence="1">
    <location>
        <position position="415"/>
    </location>
    <ligand>
        <name>ADP</name>
        <dbReference type="ChEBI" id="CHEBI:456216"/>
    </ligand>
</feature>
<feature type="modified residue" description="Phosphohistidine; by HPr" evidence="1">
    <location>
        <position position="231"/>
    </location>
</feature>
<keyword id="KW-0067">ATP-binding</keyword>
<keyword id="KW-0319">Glycerol metabolism</keyword>
<keyword id="KW-0418">Kinase</keyword>
<keyword id="KW-0547">Nucleotide-binding</keyword>
<keyword id="KW-0597">Phosphoprotein</keyword>
<keyword id="KW-0808">Transferase</keyword>
<accession>A0AIY7</accession>
<proteinExistence type="inferred from homology"/>
<organism>
    <name type="scientific">Listeria welshimeri serovar 6b (strain ATCC 35897 / DSM 20650 / CCUG 15529 / CIP 8149 / NCTC 11857 / SLCC 5334 / V8)</name>
    <dbReference type="NCBI Taxonomy" id="386043"/>
    <lineage>
        <taxon>Bacteria</taxon>
        <taxon>Bacillati</taxon>
        <taxon>Bacillota</taxon>
        <taxon>Bacilli</taxon>
        <taxon>Bacillales</taxon>
        <taxon>Listeriaceae</taxon>
        <taxon>Listeria</taxon>
    </lineage>
</organism>
<protein>
    <recommendedName>
        <fullName evidence="1">Glycerol kinase</fullName>
        <ecNumber evidence="1">2.7.1.30</ecNumber>
    </recommendedName>
    <alternativeName>
        <fullName evidence="1">ATP:glycerol 3-phosphotransferase</fullName>
    </alternativeName>
    <alternativeName>
        <fullName evidence="1">Glycerokinase</fullName>
        <shortName evidence="1">GK</shortName>
    </alternativeName>
</protein>
<comment type="function">
    <text evidence="1">Key enzyme in the regulation of glycerol uptake and metabolism. Catalyzes the phosphorylation of glycerol to yield sn-glycerol 3-phosphate.</text>
</comment>
<comment type="catalytic activity">
    <reaction evidence="1">
        <text>glycerol + ATP = sn-glycerol 3-phosphate + ADP + H(+)</text>
        <dbReference type="Rhea" id="RHEA:21644"/>
        <dbReference type="ChEBI" id="CHEBI:15378"/>
        <dbReference type="ChEBI" id="CHEBI:17754"/>
        <dbReference type="ChEBI" id="CHEBI:30616"/>
        <dbReference type="ChEBI" id="CHEBI:57597"/>
        <dbReference type="ChEBI" id="CHEBI:456216"/>
        <dbReference type="EC" id="2.7.1.30"/>
    </reaction>
</comment>
<comment type="activity regulation">
    <text evidence="1">Activated by phosphorylation and inhibited by fructose 1,6-bisphosphate (FBP).</text>
</comment>
<comment type="pathway">
    <text evidence="1">Polyol metabolism; glycerol degradation via glycerol kinase pathway; sn-glycerol 3-phosphate from glycerol: step 1/1.</text>
</comment>
<comment type="subunit">
    <text evidence="1">Homotetramer and homodimer (in equilibrium).</text>
</comment>
<comment type="PTM">
    <text evidence="1">The phosphoenolpyruvate-dependent sugar phosphotransferase system (PTS), including enzyme I, and histidine-containing protein (HPr) are required for the phosphorylation, which leads to the activation of the enzyme.</text>
</comment>
<comment type="similarity">
    <text evidence="1">Belongs to the FGGY kinase family.</text>
</comment>
<reference key="1">
    <citation type="journal article" date="2006" name="J. Bacteriol.">
        <title>Whole-genome sequence of Listeria welshimeri reveals common steps in genome reduction with Listeria innocua as compared to Listeria monocytogenes.</title>
        <authorList>
            <person name="Hain T."/>
            <person name="Steinweg C."/>
            <person name="Kuenne C.T."/>
            <person name="Billion A."/>
            <person name="Ghai R."/>
            <person name="Chatterjee S.S."/>
            <person name="Domann E."/>
            <person name="Kaerst U."/>
            <person name="Goesmann A."/>
            <person name="Bekel T."/>
            <person name="Bartels D."/>
            <person name="Kaiser O."/>
            <person name="Meyer F."/>
            <person name="Puehler A."/>
            <person name="Weisshaar B."/>
            <person name="Wehland J."/>
            <person name="Liang C."/>
            <person name="Dandekar T."/>
            <person name="Lampidis R."/>
            <person name="Kreft J."/>
            <person name="Goebel W."/>
            <person name="Chakraborty T."/>
        </authorList>
    </citation>
    <scope>NUCLEOTIDE SEQUENCE [LARGE SCALE GENOMIC DNA]</scope>
    <source>
        <strain>ATCC 35897 / DSM 20650 / CCUG 15529 / CIP 8149 / NCTC 11857 / SLCC 5334 / V8</strain>
    </source>
</reference>
<gene>
    <name evidence="1" type="primary">glpK</name>
    <name type="ordered locus">lwe1551</name>
</gene>